<keyword id="KW-1015">Disulfide bond</keyword>
<keyword id="KW-1043">Host membrane</keyword>
<keyword id="KW-0472">Membrane</keyword>
<keyword id="KW-1185">Reference proteome</keyword>
<keyword id="KW-0812">Transmembrane</keyword>
<keyword id="KW-1133">Transmembrane helix</keyword>
<keyword id="KW-0261">Viral envelope protein</keyword>
<keyword id="KW-0946">Virion</keyword>
<gene>
    <name type="primary">M</name>
    <name type="ORF">6</name>
</gene>
<proteinExistence type="evidence at protein level"/>
<comment type="function">
    <text>Major envelope protein.</text>
</comment>
<comment type="subunit">
    <text evidence="2">Heterodimer with glycoprotein 5; disulfide-linked. This heterodimerization is required for transport to the Golgi complex.</text>
</comment>
<comment type="subcellular location">
    <subcellularLocation>
        <location evidence="3">Virion membrane</location>
        <topology evidence="3">Multi-pass membrane protein</topology>
    </subcellularLocation>
    <subcellularLocation>
        <location evidence="3">Host membrane</location>
        <topology evidence="3">Multi-pass membrane protein</topology>
    </subcellularLocation>
</comment>
<comment type="similarity">
    <text evidence="3">Belongs to the arteriviridae membrane protein family.</text>
</comment>
<dbReference type="EMBL" id="X53459">
    <property type="protein sequence ID" value="CAA37545.1"/>
    <property type="molecule type" value="Genomic_RNA"/>
</dbReference>
<dbReference type="PIR" id="G39925">
    <property type="entry name" value="MMWVEV"/>
</dbReference>
<dbReference type="RefSeq" id="NP_065660.1">
    <property type="nucleotide sequence ID" value="NC_002532.2"/>
</dbReference>
<dbReference type="KEGG" id="vg:921340"/>
<dbReference type="Proteomes" id="UP000000353">
    <property type="component" value="Segment"/>
</dbReference>
<dbReference type="GO" id="GO:0033644">
    <property type="term" value="C:host cell membrane"/>
    <property type="evidence" value="ECO:0007669"/>
    <property type="project" value="UniProtKB-SubCell"/>
</dbReference>
<dbReference type="GO" id="GO:0016020">
    <property type="term" value="C:membrane"/>
    <property type="evidence" value="ECO:0007669"/>
    <property type="project" value="UniProtKB-KW"/>
</dbReference>
<dbReference type="GO" id="GO:0019031">
    <property type="term" value="C:viral envelope"/>
    <property type="evidence" value="ECO:0007669"/>
    <property type="project" value="UniProtKB-KW"/>
</dbReference>
<dbReference type="GO" id="GO:0055036">
    <property type="term" value="C:virion membrane"/>
    <property type="evidence" value="ECO:0007669"/>
    <property type="project" value="UniProtKB-SubCell"/>
</dbReference>
<dbReference type="InterPro" id="IPR001332">
    <property type="entry name" value="Arteri_GP5"/>
</dbReference>
<dbReference type="Pfam" id="PF00951">
    <property type="entry name" value="Arteri_Gl"/>
    <property type="match status" value="1"/>
</dbReference>
<reference key="1">
    <citation type="journal article" date="1991" name="J. Virol.">
        <title>Equine arteritis virus is not a togavirus but belongs to the coronaviruslike superfamily.</title>
        <authorList>
            <person name="den Boon J.A."/>
            <person name="Snijder E.J."/>
            <person name="Chirnside E.D."/>
            <person name="de Vries A.A.F."/>
            <person name="Horzinek M.C."/>
            <person name="Spaan W.J.M."/>
        </authorList>
    </citation>
    <scope>NUCLEOTIDE SEQUENCE [GENOMIC RNA]</scope>
</reference>
<reference key="2">
    <citation type="journal article" date="2003" name="J. Virol.">
        <title>Heterodimerization of the two major envelope proteins is essential for arterivirus infectivity.</title>
        <authorList>
            <person name="Snijder E.J."/>
            <person name="Dobbe J.C."/>
            <person name="Spaan W.J."/>
        </authorList>
    </citation>
    <scope>SUBUNIT</scope>
    <scope>MUTAGENESIS OF CYS-8</scope>
</reference>
<organismHost>
    <name type="scientific">Equidae</name>
    <name type="common">horses</name>
    <dbReference type="NCBI Taxonomy" id="9788"/>
</organismHost>
<organism>
    <name type="scientific">Equine arteritis virus (strain Bucyrus)</name>
    <name type="common">EAV</name>
    <dbReference type="NCBI Taxonomy" id="299386"/>
    <lineage>
        <taxon>Viruses</taxon>
        <taxon>Riboviria</taxon>
        <taxon>Orthornavirae</taxon>
        <taxon>Pisuviricota</taxon>
        <taxon>Pisoniviricetes</taxon>
        <taxon>Nidovirales</taxon>
        <taxon>Arnidovirineae</taxon>
        <taxon>Arteriviridae</taxon>
        <taxon>Equarterivirinae</taxon>
        <taxon>Alphaarterivirus</taxon>
        <taxon>Alphaarterivirus equid</taxon>
    </lineage>
</organism>
<evidence type="ECO:0000255" key="1"/>
<evidence type="ECO:0000269" key="2">
    <source>
    </source>
</evidence>
<evidence type="ECO:0000305" key="3"/>
<feature type="chain" id="PRO_0000080874" description="Membrane protein">
    <location>
        <begin position="1"/>
        <end position="162"/>
    </location>
</feature>
<feature type="topological domain" description="Virion surface" evidence="1">
    <location>
        <begin position="1"/>
        <end position="10"/>
    </location>
</feature>
<feature type="transmembrane region" description="Helical" evidence="1">
    <location>
        <begin position="11"/>
        <end position="31"/>
    </location>
</feature>
<feature type="topological domain" description="Intravirion" evidence="1">
    <location>
        <begin position="32"/>
        <end position="40"/>
    </location>
</feature>
<feature type="transmembrane region" description="Helical" evidence="1">
    <location>
        <begin position="41"/>
        <end position="61"/>
    </location>
</feature>
<feature type="topological domain" description="Virion surface" evidence="1">
    <location>
        <begin position="62"/>
        <end position="67"/>
    </location>
</feature>
<feature type="transmembrane region" description="Helical" evidence="1">
    <location>
        <begin position="68"/>
        <end position="88"/>
    </location>
</feature>
<feature type="topological domain" description="Intravirion" evidence="1">
    <location>
        <begin position="89"/>
        <end position="162"/>
    </location>
</feature>
<feature type="disulfide bond" description="Interchain (with C-34 in GP5)">
    <location>
        <position position="8"/>
    </location>
</feature>
<feature type="mutagenesis site" description="Complete loss of infectivity." evidence="2">
    <original>C</original>
    <variation>S</variation>
    <location>
        <position position="8"/>
    </location>
</feature>
<name>M_EAVBU</name>
<sequence length="162" mass="17744">MGAIDSFCGDGILGEYLDYFILSVPLLLLLTRYVASGLVYVLTALFYSFVLAAYIWFVIVGRAFSTAYAFVLLAAFLLLVMRMIVGMMPRLRSIFNHRQLVVADFVDTPSGPVPIPRSTTQVVVRGNGYTAVGNKLVDGVKTITSAGRLFSKRTAATAYKLQ</sequence>
<accession>P28991</accession>
<protein>
    <recommendedName>
        <fullName>Membrane protein</fullName>
        <shortName>Protein M</shortName>
    </recommendedName>
</protein>